<keyword id="KW-0328">Glycosyltransferase</keyword>
<keyword id="KW-0808">Transferase</keyword>
<organism>
    <name type="scientific">Acidovorax sp. (strain JS42)</name>
    <dbReference type="NCBI Taxonomy" id="232721"/>
    <lineage>
        <taxon>Bacteria</taxon>
        <taxon>Pseudomonadati</taxon>
        <taxon>Pseudomonadota</taxon>
        <taxon>Betaproteobacteria</taxon>
        <taxon>Burkholderiales</taxon>
        <taxon>Comamonadaceae</taxon>
        <taxon>Acidovorax</taxon>
    </lineage>
</organism>
<reference key="1">
    <citation type="submission" date="2006-12" db="EMBL/GenBank/DDBJ databases">
        <title>Complete sequence of chromosome 1 of Acidovorax sp. JS42.</title>
        <authorList>
            <person name="Copeland A."/>
            <person name="Lucas S."/>
            <person name="Lapidus A."/>
            <person name="Barry K."/>
            <person name="Detter J.C."/>
            <person name="Glavina del Rio T."/>
            <person name="Dalin E."/>
            <person name="Tice H."/>
            <person name="Pitluck S."/>
            <person name="Chertkov O."/>
            <person name="Brettin T."/>
            <person name="Bruce D."/>
            <person name="Han C."/>
            <person name="Tapia R."/>
            <person name="Gilna P."/>
            <person name="Schmutz J."/>
            <person name="Larimer F."/>
            <person name="Land M."/>
            <person name="Hauser L."/>
            <person name="Kyrpides N."/>
            <person name="Kim E."/>
            <person name="Stahl D."/>
            <person name="Richardson P."/>
        </authorList>
    </citation>
    <scope>NUCLEOTIDE SEQUENCE [LARGE SCALE GENOMIC DNA]</scope>
    <source>
        <strain>JS42</strain>
    </source>
</reference>
<accession>A1W9F8</accession>
<protein>
    <recommendedName>
        <fullName evidence="1">Pyrimidine/purine nucleoside phosphorylase</fullName>
        <ecNumber evidence="1">2.4.2.1</ecNumber>
        <ecNumber evidence="1">2.4.2.2</ecNumber>
    </recommendedName>
    <alternativeName>
        <fullName evidence="1">Adenosine phosphorylase</fullName>
    </alternativeName>
    <alternativeName>
        <fullName evidence="1">Cytidine phosphorylase</fullName>
    </alternativeName>
    <alternativeName>
        <fullName evidence="1">Guanosine phosphorylase</fullName>
    </alternativeName>
    <alternativeName>
        <fullName evidence="1">Inosine phosphorylase</fullName>
    </alternativeName>
    <alternativeName>
        <fullName evidence="1">Thymidine phosphorylase</fullName>
    </alternativeName>
    <alternativeName>
        <fullName evidence="1">Uridine phosphorylase</fullName>
    </alternativeName>
    <alternativeName>
        <fullName evidence="1">Xanthosine phosphorylase</fullName>
    </alternativeName>
</protein>
<gene>
    <name evidence="1" type="primary">ppnP</name>
    <name type="ordered locus">Ajs_2742</name>
</gene>
<evidence type="ECO:0000255" key="1">
    <source>
        <dbReference type="HAMAP-Rule" id="MF_01537"/>
    </source>
</evidence>
<proteinExistence type="inferred from homology"/>
<sequence>MTTEKIDGVSVTTQANVYFDGKCVSHNLTYPDGTKKSVGVVLPATLTFGTGAPEIMECVGGSCEYQLDGTDAWVKVGAGEKFSVPGNSKFNIRVTEAFHYICHYG</sequence>
<name>PPNP_ACISJ</name>
<dbReference type="EC" id="2.4.2.1" evidence="1"/>
<dbReference type="EC" id="2.4.2.2" evidence="1"/>
<dbReference type="EMBL" id="CP000539">
    <property type="protein sequence ID" value="ABM42883.1"/>
    <property type="molecule type" value="Genomic_DNA"/>
</dbReference>
<dbReference type="SMR" id="A1W9F8"/>
<dbReference type="STRING" id="232721.Ajs_2742"/>
<dbReference type="KEGG" id="ajs:Ajs_2742"/>
<dbReference type="eggNOG" id="COG3123">
    <property type="taxonomic scope" value="Bacteria"/>
</dbReference>
<dbReference type="HOGENOM" id="CLU_157874_1_0_4"/>
<dbReference type="Proteomes" id="UP000000645">
    <property type="component" value="Chromosome"/>
</dbReference>
<dbReference type="GO" id="GO:0005829">
    <property type="term" value="C:cytosol"/>
    <property type="evidence" value="ECO:0007669"/>
    <property type="project" value="TreeGrafter"/>
</dbReference>
<dbReference type="GO" id="GO:0047975">
    <property type="term" value="F:guanosine phosphorylase activity"/>
    <property type="evidence" value="ECO:0007669"/>
    <property type="project" value="UniProtKB-EC"/>
</dbReference>
<dbReference type="GO" id="GO:0004731">
    <property type="term" value="F:purine-nucleoside phosphorylase activity"/>
    <property type="evidence" value="ECO:0007669"/>
    <property type="project" value="UniProtKB-UniRule"/>
</dbReference>
<dbReference type="GO" id="GO:0009032">
    <property type="term" value="F:thymidine phosphorylase activity"/>
    <property type="evidence" value="ECO:0007669"/>
    <property type="project" value="UniProtKB-EC"/>
</dbReference>
<dbReference type="GO" id="GO:0004850">
    <property type="term" value="F:uridine phosphorylase activity"/>
    <property type="evidence" value="ECO:0007669"/>
    <property type="project" value="UniProtKB-EC"/>
</dbReference>
<dbReference type="CDD" id="cd20296">
    <property type="entry name" value="cupin_PpnP-like"/>
    <property type="match status" value="1"/>
</dbReference>
<dbReference type="Gene3D" id="2.60.120.10">
    <property type="entry name" value="Jelly Rolls"/>
    <property type="match status" value="1"/>
</dbReference>
<dbReference type="HAMAP" id="MF_01537">
    <property type="entry name" value="Nucleos_phosphorylase_PpnP"/>
    <property type="match status" value="1"/>
</dbReference>
<dbReference type="InterPro" id="IPR009664">
    <property type="entry name" value="Ppnp"/>
</dbReference>
<dbReference type="InterPro" id="IPR014710">
    <property type="entry name" value="RmlC-like_jellyroll"/>
</dbReference>
<dbReference type="InterPro" id="IPR011051">
    <property type="entry name" value="RmlC_Cupin_sf"/>
</dbReference>
<dbReference type="PANTHER" id="PTHR36540">
    <property type="entry name" value="PYRIMIDINE/PURINE NUCLEOSIDE PHOSPHORYLASE"/>
    <property type="match status" value="1"/>
</dbReference>
<dbReference type="PANTHER" id="PTHR36540:SF1">
    <property type="entry name" value="PYRIMIDINE_PURINE NUCLEOSIDE PHOSPHORYLASE"/>
    <property type="match status" value="1"/>
</dbReference>
<dbReference type="Pfam" id="PF06865">
    <property type="entry name" value="Ppnp"/>
    <property type="match status" value="1"/>
</dbReference>
<dbReference type="SUPFAM" id="SSF51182">
    <property type="entry name" value="RmlC-like cupins"/>
    <property type="match status" value="1"/>
</dbReference>
<feature type="chain" id="PRO_0000298685" description="Pyrimidine/purine nucleoside phosphorylase">
    <location>
        <begin position="1"/>
        <end position="105"/>
    </location>
</feature>
<comment type="function">
    <text evidence="1">Catalyzes the phosphorolysis of diverse nucleosides, yielding D-ribose 1-phosphate and the respective free bases. Can use uridine, adenosine, guanosine, cytidine, thymidine, inosine and xanthosine as substrates. Also catalyzes the reverse reactions.</text>
</comment>
<comment type="catalytic activity">
    <reaction evidence="1">
        <text>a purine D-ribonucleoside + phosphate = a purine nucleobase + alpha-D-ribose 1-phosphate</text>
        <dbReference type="Rhea" id="RHEA:19805"/>
        <dbReference type="ChEBI" id="CHEBI:26386"/>
        <dbReference type="ChEBI" id="CHEBI:43474"/>
        <dbReference type="ChEBI" id="CHEBI:57720"/>
        <dbReference type="ChEBI" id="CHEBI:142355"/>
        <dbReference type="EC" id="2.4.2.1"/>
    </reaction>
</comment>
<comment type="catalytic activity">
    <reaction evidence="1">
        <text>adenosine + phosphate = alpha-D-ribose 1-phosphate + adenine</text>
        <dbReference type="Rhea" id="RHEA:27642"/>
        <dbReference type="ChEBI" id="CHEBI:16335"/>
        <dbReference type="ChEBI" id="CHEBI:16708"/>
        <dbReference type="ChEBI" id="CHEBI:43474"/>
        <dbReference type="ChEBI" id="CHEBI:57720"/>
        <dbReference type="EC" id="2.4.2.1"/>
    </reaction>
</comment>
<comment type="catalytic activity">
    <reaction evidence="1">
        <text>cytidine + phosphate = cytosine + alpha-D-ribose 1-phosphate</text>
        <dbReference type="Rhea" id="RHEA:52540"/>
        <dbReference type="ChEBI" id="CHEBI:16040"/>
        <dbReference type="ChEBI" id="CHEBI:17562"/>
        <dbReference type="ChEBI" id="CHEBI:43474"/>
        <dbReference type="ChEBI" id="CHEBI:57720"/>
        <dbReference type="EC" id="2.4.2.2"/>
    </reaction>
</comment>
<comment type="catalytic activity">
    <reaction evidence="1">
        <text>guanosine + phosphate = alpha-D-ribose 1-phosphate + guanine</text>
        <dbReference type="Rhea" id="RHEA:13233"/>
        <dbReference type="ChEBI" id="CHEBI:16235"/>
        <dbReference type="ChEBI" id="CHEBI:16750"/>
        <dbReference type="ChEBI" id="CHEBI:43474"/>
        <dbReference type="ChEBI" id="CHEBI:57720"/>
        <dbReference type="EC" id="2.4.2.1"/>
    </reaction>
</comment>
<comment type="catalytic activity">
    <reaction evidence="1">
        <text>inosine + phosphate = alpha-D-ribose 1-phosphate + hypoxanthine</text>
        <dbReference type="Rhea" id="RHEA:27646"/>
        <dbReference type="ChEBI" id="CHEBI:17368"/>
        <dbReference type="ChEBI" id="CHEBI:17596"/>
        <dbReference type="ChEBI" id="CHEBI:43474"/>
        <dbReference type="ChEBI" id="CHEBI:57720"/>
        <dbReference type="EC" id="2.4.2.1"/>
    </reaction>
</comment>
<comment type="catalytic activity">
    <reaction evidence="1">
        <text>thymidine + phosphate = 2-deoxy-alpha-D-ribose 1-phosphate + thymine</text>
        <dbReference type="Rhea" id="RHEA:16037"/>
        <dbReference type="ChEBI" id="CHEBI:17748"/>
        <dbReference type="ChEBI" id="CHEBI:17821"/>
        <dbReference type="ChEBI" id="CHEBI:43474"/>
        <dbReference type="ChEBI" id="CHEBI:57259"/>
        <dbReference type="EC" id="2.4.2.2"/>
    </reaction>
</comment>
<comment type="catalytic activity">
    <reaction evidence="1">
        <text>uridine + phosphate = alpha-D-ribose 1-phosphate + uracil</text>
        <dbReference type="Rhea" id="RHEA:24388"/>
        <dbReference type="ChEBI" id="CHEBI:16704"/>
        <dbReference type="ChEBI" id="CHEBI:17568"/>
        <dbReference type="ChEBI" id="CHEBI:43474"/>
        <dbReference type="ChEBI" id="CHEBI:57720"/>
        <dbReference type="EC" id="2.4.2.2"/>
    </reaction>
</comment>
<comment type="catalytic activity">
    <reaction evidence="1">
        <text>xanthosine + phosphate = alpha-D-ribose 1-phosphate + xanthine</text>
        <dbReference type="Rhea" id="RHEA:27638"/>
        <dbReference type="ChEBI" id="CHEBI:17712"/>
        <dbReference type="ChEBI" id="CHEBI:18107"/>
        <dbReference type="ChEBI" id="CHEBI:43474"/>
        <dbReference type="ChEBI" id="CHEBI:57720"/>
        <dbReference type="EC" id="2.4.2.1"/>
    </reaction>
</comment>
<comment type="similarity">
    <text evidence="1">Belongs to the nucleoside phosphorylase PpnP family.</text>
</comment>